<comment type="function">
    <text evidence="1">Catalyzes the radical-mediated insertion of two sulfur atoms into the C-6 and C-8 positions of the octanoyl moiety bound to the lipoyl domains of lipoate-dependent enzymes, thereby converting the octanoylated domains into lipoylated derivatives.</text>
</comment>
<comment type="catalytic activity">
    <reaction evidence="1">
        <text>[[Fe-S] cluster scaffold protein carrying a second [4Fe-4S](2+) cluster] + N(6)-octanoyl-L-lysyl-[protein] + 2 oxidized [2Fe-2S]-[ferredoxin] + 2 S-adenosyl-L-methionine + 4 H(+) = [[Fe-S] cluster scaffold protein] + N(6)-[(R)-dihydrolipoyl]-L-lysyl-[protein] + 4 Fe(3+) + 2 hydrogen sulfide + 2 5'-deoxyadenosine + 2 L-methionine + 2 reduced [2Fe-2S]-[ferredoxin]</text>
        <dbReference type="Rhea" id="RHEA:16585"/>
        <dbReference type="Rhea" id="RHEA-COMP:9928"/>
        <dbReference type="Rhea" id="RHEA-COMP:10000"/>
        <dbReference type="Rhea" id="RHEA-COMP:10001"/>
        <dbReference type="Rhea" id="RHEA-COMP:10475"/>
        <dbReference type="Rhea" id="RHEA-COMP:14568"/>
        <dbReference type="Rhea" id="RHEA-COMP:14569"/>
        <dbReference type="ChEBI" id="CHEBI:15378"/>
        <dbReference type="ChEBI" id="CHEBI:17319"/>
        <dbReference type="ChEBI" id="CHEBI:29034"/>
        <dbReference type="ChEBI" id="CHEBI:29919"/>
        <dbReference type="ChEBI" id="CHEBI:33722"/>
        <dbReference type="ChEBI" id="CHEBI:33737"/>
        <dbReference type="ChEBI" id="CHEBI:33738"/>
        <dbReference type="ChEBI" id="CHEBI:57844"/>
        <dbReference type="ChEBI" id="CHEBI:59789"/>
        <dbReference type="ChEBI" id="CHEBI:78809"/>
        <dbReference type="ChEBI" id="CHEBI:83100"/>
        <dbReference type="EC" id="2.8.1.8"/>
    </reaction>
</comment>
<comment type="cofactor">
    <cofactor evidence="1">
        <name>[4Fe-4S] cluster</name>
        <dbReference type="ChEBI" id="CHEBI:49883"/>
    </cofactor>
    <text evidence="1">Binds 2 [4Fe-4S] clusters per subunit. One cluster is coordinated with 3 cysteines and an exchangeable S-adenosyl-L-methionine.</text>
</comment>
<comment type="pathway">
    <text evidence="1">Protein modification; protein lipoylation via endogenous pathway; protein N(6)-(lipoyl)lysine from octanoyl-[acyl-carrier-protein].</text>
</comment>
<comment type="subcellular location">
    <subcellularLocation>
        <location evidence="1">Cytoplasm</location>
    </subcellularLocation>
</comment>
<comment type="similarity">
    <text evidence="1">Belongs to the radical SAM superfamily. Lipoyl synthase family.</text>
</comment>
<name>LIPA_STAA3</name>
<sequence>MATKNEEILRKPDWLKIKLNTNENYTGLKKMMREKNLNTVCEEAKCPNIHECWGARRTATFMILGAVCTRACRFCAVKTGLPNELDLNEPERVAESVELMNLKHVVITAVARDDLRDAGSNVYAETVRKVRERNPFTTIEILPSDMGGDYDALETLMASRPDILNHNIETVRRLTPRVRARATYDRTLEFLRRSKELQPDIPTKSSIMVGLGETIEEIYETMDDLRANDVDILTIGQYLQPSRKHLKVQKYYTPLEFGKLRKVAMDKGFKHCQAGPLVRSSYHADEQVNEAAKEKQRQGEAQLNS</sequence>
<protein>
    <recommendedName>
        <fullName evidence="1">Lipoyl synthase</fullName>
        <ecNumber evidence="1">2.8.1.8</ecNumber>
    </recommendedName>
    <alternativeName>
        <fullName evidence="1">Lip-syn</fullName>
        <shortName evidence="1">LS</shortName>
    </alternativeName>
    <alternativeName>
        <fullName evidence="1">Lipoate synthase</fullName>
    </alternativeName>
    <alternativeName>
        <fullName evidence="1">Lipoic acid synthase</fullName>
    </alternativeName>
    <alternativeName>
        <fullName evidence="1">Sulfur insertion protein LipA</fullName>
    </alternativeName>
</protein>
<feature type="chain" id="PRO_1000012288" description="Lipoyl synthase">
    <location>
        <begin position="1"/>
        <end position="305"/>
    </location>
</feature>
<feature type="domain" description="Radical SAM core" evidence="2">
    <location>
        <begin position="54"/>
        <end position="270"/>
    </location>
</feature>
<feature type="region of interest" description="Disordered" evidence="3">
    <location>
        <begin position="283"/>
        <end position="305"/>
    </location>
</feature>
<feature type="compositionally biased region" description="Basic and acidic residues" evidence="3">
    <location>
        <begin position="283"/>
        <end position="298"/>
    </location>
</feature>
<feature type="binding site" evidence="1">
    <location>
        <position position="41"/>
    </location>
    <ligand>
        <name>[4Fe-4S] cluster</name>
        <dbReference type="ChEBI" id="CHEBI:49883"/>
        <label>1</label>
    </ligand>
</feature>
<feature type="binding site" evidence="1">
    <location>
        <position position="46"/>
    </location>
    <ligand>
        <name>[4Fe-4S] cluster</name>
        <dbReference type="ChEBI" id="CHEBI:49883"/>
        <label>1</label>
    </ligand>
</feature>
<feature type="binding site" evidence="1">
    <location>
        <position position="52"/>
    </location>
    <ligand>
        <name>[4Fe-4S] cluster</name>
        <dbReference type="ChEBI" id="CHEBI:49883"/>
        <label>1</label>
    </ligand>
</feature>
<feature type="binding site" evidence="1">
    <location>
        <position position="68"/>
    </location>
    <ligand>
        <name>[4Fe-4S] cluster</name>
        <dbReference type="ChEBI" id="CHEBI:49883"/>
        <label>2</label>
        <note>4Fe-4S-S-AdoMet</note>
    </ligand>
</feature>
<feature type="binding site" evidence="1">
    <location>
        <position position="72"/>
    </location>
    <ligand>
        <name>[4Fe-4S] cluster</name>
        <dbReference type="ChEBI" id="CHEBI:49883"/>
        <label>2</label>
        <note>4Fe-4S-S-AdoMet</note>
    </ligand>
</feature>
<feature type="binding site" evidence="1">
    <location>
        <position position="75"/>
    </location>
    <ligand>
        <name>[4Fe-4S] cluster</name>
        <dbReference type="ChEBI" id="CHEBI:49883"/>
        <label>2</label>
        <note>4Fe-4S-S-AdoMet</note>
    </ligand>
</feature>
<feature type="binding site" evidence="1">
    <location>
        <position position="281"/>
    </location>
    <ligand>
        <name>[4Fe-4S] cluster</name>
        <dbReference type="ChEBI" id="CHEBI:49883"/>
        <label>1</label>
    </ligand>
</feature>
<gene>
    <name evidence="1" type="primary">lipA</name>
    <name type="ordered locus">SAUSA300_0829</name>
</gene>
<dbReference type="EC" id="2.8.1.8" evidence="1"/>
<dbReference type="EMBL" id="CP000255">
    <property type="protein sequence ID" value="ABD22039.1"/>
    <property type="molecule type" value="Genomic_DNA"/>
</dbReference>
<dbReference type="RefSeq" id="WP_000201875.1">
    <property type="nucleotide sequence ID" value="NZ_CP027476.1"/>
</dbReference>
<dbReference type="SMR" id="Q2FIE9"/>
<dbReference type="GeneID" id="98345243"/>
<dbReference type="KEGG" id="saa:SAUSA300_0829"/>
<dbReference type="HOGENOM" id="CLU_033144_2_1_9"/>
<dbReference type="OMA" id="PYCDIDF"/>
<dbReference type="PHI-base" id="PHI:9458"/>
<dbReference type="Proteomes" id="UP000001939">
    <property type="component" value="Chromosome"/>
</dbReference>
<dbReference type="GO" id="GO:0005737">
    <property type="term" value="C:cytoplasm"/>
    <property type="evidence" value="ECO:0007669"/>
    <property type="project" value="UniProtKB-SubCell"/>
</dbReference>
<dbReference type="GO" id="GO:0051539">
    <property type="term" value="F:4 iron, 4 sulfur cluster binding"/>
    <property type="evidence" value="ECO:0007669"/>
    <property type="project" value="UniProtKB-UniRule"/>
</dbReference>
<dbReference type="GO" id="GO:0016992">
    <property type="term" value="F:lipoate synthase activity"/>
    <property type="evidence" value="ECO:0007669"/>
    <property type="project" value="UniProtKB-UniRule"/>
</dbReference>
<dbReference type="GO" id="GO:0046872">
    <property type="term" value="F:metal ion binding"/>
    <property type="evidence" value="ECO:0007669"/>
    <property type="project" value="UniProtKB-KW"/>
</dbReference>
<dbReference type="CDD" id="cd01335">
    <property type="entry name" value="Radical_SAM"/>
    <property type="match status" value="1"/>
</dbReference>
<dbReference type="FunFam" id="3.20.20.70:FF:000040">
    <property type="entry name" value="Lipoyl synthase"/>
    <property type="match status" value="1"/>
</dbReference>
<dbReference type="Gene3D" id="3.20.20.70">
    <property type="entry name" value="Aldolase class I"/>
    <property type="match status" value="1"/>
</dbReference>
<dbReference type="HAMAP" id="MF_00206">
    <property type="entry name" value="Lipoyl_synth"/>
    <property type="match status" value="1"/>
</dbReference>
<dbReference type="InterPro" id="IPR013785">
    <property type="entry name" value="Aldolase_TIM"/>
</dbReference>
<dbReference type="InterPro" id="IPR006638">
    <property type="entry name" value="Elp3/MiaA/NifB-like_rSAM"/>
</dbReference>
<dbReference type="InterPro" id="IPR031691">
    <property type="entry name" value="LIAS_N"/>
</dbReference>
<dbReference type="InterPro" id="IPR003698">
    <property type="entry name" value="Lipoyl_synth"/>
</dbReference>
<dbReference type="InterPro" id="IPR007197">
    <property type="entry name" value="rSAM"/>
</dbReference>
<dbReference type="NCBIfam" id="TIGR00510">
    <property type="entry name" value="lipA"/>
    <property type="match status" value="1"/>
</dbReference>
<dbReference type="NCBIfam" id="NF004019">
    <property type="entry name" value="PRK05481.1"/>
    <property type="match status" value="1"/>
</dbReference>
<dbReference type="NCBIfam" id="NF009544">
    <property type="entry name" value="PRK12928.1"/>
    <property type="match status" value="1"/>
</dbReference>
<dbReference type="PANTHER" id="PTHR10949">
    <property type="entry name" value="LIPOYL SYNTHASE"/>
    <property type="match status" value="1"/>
</dbReference>
<dbReference type="PANTHER" id="PTHR10949:SF0">
    <property type="entry name" value="LIPOYL SYNTHASE, MITOCHONDRIAL"/>
    <property type="match status" value="1"/>
</dbReference>
<dbReference type="Pfam" id="PF16881">
    <property type="entry name" value="LIAS_N"/>
    <property type="match status" value="1"/>
</dbReference>
<dbReference type="Pfam" id="PF04055">
    <property type="entry name" value="Radical_SAM"/>
    <property type="match status" value="1"/>
</dbReference>
<dbReference type="PIRSF" id="PIRSF005963">
    <property type="entry name" value="Lipoyl_synth"/>
    <property type="match status" value="1"/>
</dbReference>
<dbReference type="SFLD" id="SFLDF00271">
    <property type="entry name" value="lipoyl_synthase"/>
    <property type="match status" value="1"/>
</dbReference>
<dbReference type="SFLD" id="SFLDS00029">
    <property type="entry name" value="Radical_SAM"/>
    <property type="match status" value="1"/>
</dbReference>
<dbReference type="SMART" id="SM00729">
    <property type="entry name" value="Elp3"/>
    <property type="match status" value="1"/>
</dbReference>
<dbReference type="SUPFAM" id="SSF102114">
    <property type="entry name" value="Radical SAM enzymes"/>
    <property type="match status" value="1"/>
</dbReference>
<dbReference type="PROSITE" id="PS51918">
    <property type="entry name" value="RADICAL_SAM"/>
    <property type="match status" value="1"/>
</dbReference>
<accession>Q2FIE9</accession>
<proteinExistence type="inferred from homology"/>
<evidence type="ECO:0000255" key="1">
    <source>
        <dbReference type="HAMAP-Rule" id="MF_00206"/>
    </source>
</evidence>
<evidence type="ECO:0000255" key="2">
    <source>
        <dbReference type="PROSITE-ProRule" id="PRU01266"/>
    </source>
</evidence>
<evidence type="ECO:0000256" key="3">
    <source>
        <dbReference type="SAM" id="MobiDB-lite"/>
    </source>
</evidence>
<keyword id="KW-0004">4Fe-4S</keyword>
<keyword id="KW-0963">Cytoplasm</keyword>
<keyword id="KW-0408">Iron</keyword>
<keyword id="KW-0411">Iron-sulfur</keyword>
<keyword id="KW-0479">Metal-binding</keyword>
<keyword id="KW-0949">S-adenosyl-L-methionine</keyword>
<keyword id="KW-0808">Transferase</keyword>
<reference key="1">
    <citation type="journal article" date="2006" name="Lancet">
        <title>Complete genome sequence of USA300, an epidemic clone of community-acquired meticillin-resistant Staphylococcus aureus.</title>
        <authorList>
            <person name="Diep B.A."/>
            <person name="Gill S.R."/>
            <person name="Chang R.F."/>
            <person name="Phan T.H."/>
            <person name="Chen J.H."/>
            <person name="Davidson M.G."/>
            <person name="Lin F."/>
            <person name="Lin J."/>
            <person name="Carleton H.A."/>
            <person name="Mongodin E.F."/>
            <person name="Sensabaugh G.F."/>
            <person name="Perdreau-Remington F."/>
        </authorList>
    </citation>
    <scope>NUCLEOTIDE SEQUENCE [LARGE SCALE GENOMIC DNA]</scope>
    <source>
        <strain>USA300</strain>
    </source>
</reference>
<organism>
    <name type="scientific">Staphylococcus aureus (strain USA300)</name>
    <dbReference type="NCBI Taxonomy" id="367830"/>
    <lineage>
        <taxon>Bacteria</taxon>
        <taxon>Bacillati</taxon>
        <taxon>Bacillota</taxon>
        <taxon>Bacilli</taxon>
        <taxon>Bacillales</taxon>
        <taxon>Staphylococcaceae</taxon>
        <taxon>Staphylococcus</taxon>
    </lineage>
</organism>